<keyword id="KW-0064">Aspartyl protease</keyword>
<keyword id="KW-0165">Cleavage on pair of basic residues</keyword>
<keyword id="KW-1015">Disulfide bond</keyword>
<keyword id="KW-0325">Glycoprotein</keyword>
<keyword id="KW-0378">Hydrolase</keyword>
<keyword id="KW-0645">Protease</keyword>
<keyword id="KW-1185">Reference proteome</keyword>
<keyword id="KW-0964">Secreted</keyword>
<keyword id="KW-0732">Signal</keyword>
<keyword id="KW-0843">Virulence</keyword>
<keyword id="KW-0865">Zymogen</keyword>
<proteinExistence type="evidence at protein level"/>
<feature type="signal peptide" evidence="4">
    <location>
        <begin position="1"/>
        <end position="16"/>
    </location>
</feature>
<feature type="propeptide" id="PRO_0000424300" description="Activation peptide">
    <location>
        <begin position="17"/>
        <end position="143"/>
    </location>
</feature>
<feature type="chain" id="PRO_0000424301" description="Secreted aspartic protease 7">
    <location>
        <begin position="144"/>
        <end position="588"/>
    </location>
</feature>
<feature type="domain" description="Peptidase A1" evidence="5">
    <location>
        <begin position="226"/>
        <end position="574"/>
    </location>
</feature>
<feature type="region of interest" description="Disordered" evidence="7">
    <location>
        <begin position="83"/>
        <end position="126"/>
    </location>
</feature>
<feature type="region of interest" description="Disordered" evidence="7">
    <location>
        <begin position="145"/>
        <end position="209"/>
    </location>
</feature>
<feature type="compositionally biased region" description="Low complexity" evidence="7">
    <location>
        <begin position="94"/>
        <end position="109"/>
    </location>
</feature>
<feature type="compositionally biased region" description="Polar residues" evidence="7">
    <location>
        <begin position="160"/>
        <end position="175"/>
    </location>
</feature>
<feature type="compositionally biased region" description="Low complexity" evidence="7">
    <location>
        <begin position="181"/>
        <end position="208"/>
    </location>
</feature>
<feature type="active site" evidence="6 11">
    <location>
        <position position="244"/>
    </location>
</feature>
<feature type="active site" evidence="6 11">
    <location>
        <position position="464"/>
    </location>
</feature>
<feature type="binding site" evidence="3">
    <location>
        <begin position="244"/>
        <end position="246"/>
    </location>
    <ligand>
        <name>pepstatin A</name>
        <dbReference type="ChEBI" id="CHEBI:190525"/>
        <note>inhibitor</note>
    </ligand>
</feature>
<feature type="binding site" evidence="3">
    <location>
        <begin position="295"/>
        <end position="296"/>
    </location>
    <ligand>
        <name>pepstatin A</name>
        <dbReference type="ChEBI" id="CHEBI:190525"/>
        <note>inhibitor</note>
    </ligand>
</feature>
<feature type="binding site" evidence="3">
    <location>
        <begin position="464"/>
        <end position="468"/>
    </location>
    <ligand>
        <name>pepstatin A</name>
        <dbReference type="ChEBI" id="CHEBI:190525"/>
        <note>inhibitor</note>
    </ligand>
</feature>
<feature type="glycosylation site" description="N-linked (GlcNAc...) asparagine" evidence="4">
    <location>
        <position position="150"/>
    </location>
</feature>
<feature type="glycosylation site" description="N-linked (GlcNAc...) asparagine" evidence="4">
    <location>
        <position position="286"/>
    </location>
</feature>
<feature type="glycosylation site" description="N-linked (GlcNAc...) asparagine" evidence="4">
    <location>
        <position position="308"/>
    </location>
</feature>
<feature type="glycosylation site" description="N-linked (GlcNAc...) asparagine" evidence="4">
    <location>
        <position position="327"/>
    </location>
</feature>
<feature type="glycosylation site" description="N-linked (GlcNAc...) asparagine" evidence="4">
    <location>
        <position position="423"/>
    </location>
</feature>
<feature type="glycosylation site" description="N-linked (GlcNAc...) asparagine" evidence="4">
    <location>
        <position position="445"/>
    </location>
</feature>
<feature type="glycosylation site" description="N-linked (GlcNAc...) asparagine" evidence="4">
    <location>
        <position position="486"/>
    </location>
</feature>
<feature type="disulfide bond" evidence="2">
    <location>
        <begin position="260"/>
        <end position="269"/>
    </location>
</feature>
<feature type="disulfide bond" evidence="2">
    <location>
        <begin position="500"/>
        <end position="540"/>
    </location>
</feature>
<feature type="mutagenesis site" description="Abolishes pepstatin A insensitivity." evidence="11">
    <original>M</original>
    <variation>A</variation>
    <location>
        <position position="242"/>
    </location>
</feature>
<feature type="mutagenesis site" description="Abolishes catalytic activity." evidence="11">
    <original>D</original>
    <variation>A</variation>
    <location>
        <position position="244"/>
    </location>
</feature>
<feature type="mutagenesis site" description="Abolishes catalytic activity." evidence="11">
    <original>D</original>
    <variation>A</variation>
    <location>
        <position position="464"/>
    </location>
</feature>
<feature type="mutagenesis site" description="Abolishes pepstatin A insensitivity." evidence="11">
    <original>T</original>
    <variation>A</variation>
    <location>
        <position position="467"/>
    </location>
</feature>
<dbReference type="EC" id="3.4.23.24" evidence="10 11 12"/>
<dbReference type="EMBL" id="CP017623">
    <property type="protein sequence ID" value="AOW26160.1"/>
    <property type="molecule type" value="Genomic_DNA"/>
</dbReference>
<dbReference type="RefSeq" id="XP_713566.2">
    <property type="nucleotide sequence ID" value="XM_708473.2"/>
</dbReference>
<dbReference type="SMR" id="Q59VH7"/>
<dbReference type="STRING" id="237561.Q59VH7"/>
<dbReference type="MEROPS" id="A01.065"/>
<dbReference type="GlyCosmos" id="Q59VH7">
    <property type="glycosylation" value="7 sites, No reported glycans"/>
</dbReference>
<dbReference type="EnsemblFungi" id="C1_04870W_A-T">
    <property type="protein sequence ID" value="C1_04870W_A-T-p1"/>
    <property type="gene ID" value="C1_04870W_A"/>
</dbReference>
<dbReference type="GeneID" id="3644783"/>
<dbReference type="KEGG" id="cal:CAALFM_C104870WA"/>
<dbReference type="CGD" id="CAL0000192370">
    <property type="gene designation" value="SAP7"/>
</dbReference>
<dbReference type="VEuPathDB" id="FungiDB:C1_04870W_A"/>
<dbReference type="eggNOG" id="KOG1339">
    <property type="taxonomic scope" value="Eukaryota"/>
</dbReference>
<dbReference type="HOGENOM" id="CLU_013253_9_1_1"/>
<dbReference type="InParanoid" id="Q59VH7"/>
<dbReference type="OrthoDB" id="771136at2759"/>
<dbReference type="BRENDA" id="3.4.23.24">
    <property type="organism ID" value="1096"/>
</dbReference>
<dbReference type="PHI-base" id="PHI:480"/>
<dbReference type="PRO" id="PR:Q59VH7"/>
<dbReference type="Proteomes" id="UP000000559">
    <property type="component" value="Chromosome 1"/>
</dbReference>
<dbReference type="GO" id="GO:0005576">
    <property type="term" value="C:extracellular region"/>
    <property type="evidence" value="ECO:0000318"/>
    <property type="project" value="GO_Central"/>
</dbReference>
<dbReference type="GO" id="GO:1903561">
    <property type="term" value="C:extracellular vesicle"/>
    <property type="evidence" value="ECO:0000314"/>
    <property type="project" value="CGD"/>
</dbReference>
<dbReference type="GO" id="GO:0009277">
    <property type="term" value="C:fungal-type cell wall"/>
    <property type="evidence" value="ECO:0000318"/>
    <property type="project" value="GO_Central"/>
</dbReference>
<dbReference type="GO" id="GO:0004190">
    <property type="term" value="F:aspartic-type endopeptidase activity"/>
    <property type="evidence" value="ECO:0000314"/>
    <property type="project" value="CGD"/>
</dbReference>
<dbReference type="GO" id="GO:0031505">
    <property type="term" value="P:fungal-type cell wall organization"/>
    <property type="evidence" value="ECO:0000318"/>
    <property type="project" value="GO_Central"/>
</dbReference>
<dbReference type="GO" id="GO:0006508">
    <property type="term" value="P:proteolysis"/>
    <property type="evidence" value="ECO:0000314"/>
    <property type="project" value="CGD"/>
</dbReference>
<dbReference type="CDD" id="cd05474">
    <property type="entry name" value="SAP_like"/>
    <property type="match status" value="1"/>
</dbReference>
<dbReference type="FunFam" id="2.40.70.10:FF:000011">
    <property type="entry name" value="Aspartic protease"/>
    <property type="match status" value="1"/>
</dbReference>
<dbReference type="Gene3D" id="2.40.70.10">
    <property type="entry name" value="Acid Proteases"/>
    <property type="match status" value="2"/>
</dbReference>
<dbReference type="InterPro" id="IPR001461">
    <property type="entry name" value="Aspartic_peptidase_A1"/>
</dbReference>
<dbReference type="InterPro" id="IPR001969">
    <property type="entry name" value="Aspartic_peptidase_AS"/>
</dbReference>
<dbReference type="InterPro" id="IPR033121">
    <property type="entry name" value="PEPTIDASE_A1"/>
</dbReference>
<dbReference type="InterPro" id="IPR021109">
    <property type="entry name" value="Peptidase_aspartic_dom_sf"/>
</dbReference>
<dbReference type="InterPro" id="IPR033876">
    <property type="entry name" value="SAP-like"/>
</dbReference>
<dbReference type="PANTHER" id="PTHR47965:SF12">
    <property type="entry name" value="ASPARTIC PROTEINASE 3-RELATED"/>
    <property type="match status" value="1"/>
</dbReference>
<dbReference type="PANTHER" id="PTHR47965">
    <property type="entry name" value="ASPARTYL PROTEASE-RELATED"/>
    <property type="match status" value="1"/>
</dbReference>
<dbReference type="Pfam" id="PF00026">
    <property type="entry name" value="Asp"/>
    <property type="match status" value="1"/>
</dbReference>
<dbReference type="PRINTS" id="PR00792">
    <property type="entry name" value="PEPSIN"/>
</dbReference>
<dbReference type="SUPFAM" id="SSF50630">
    <property type="entry name" value="Acid proteases"/>
    <property type="match status" value="1"/>
</dbReference>
<dbReference type="PROSITE" id="PS00141">
    <property type="entry name" value="ASP_PROTEASE"/>
    <property type="match status" value="1"/>
</dbReference>
<dbReference type="PROSITE" id="PS51767">
    <property type="entry name" value="PEPTIDASE_A1"/>
    <property type="match status" value="1"/>
</dbReference>
<gene>
    <name evidence="13" type="primary">SAP7</name>
    <name type="ordered locus">CAALFM_C104870WA</name>
    <name type="ORF">CaO19.756</name>
    <name type="ORF">CaO19.8376</name>
</gene>
<comment type="function">
    <text evidence="2">Secreted aspartic peptidases (SAPs) are a group of ten acidic hydrolases considered as key virulence factors (By similarity). These enzymes supply the fungus with nutrient amino acids as well as are able to degrade the selected host's proteins involved in the immune defense (By similarity).</text>
</comment>
<comment type="function">
    <text evidence="12">Plays a key role in defense against host by cleaving histatin-5 (Hst 5), a peptide from human saliva that carries out fungicidal activity (PubMed:27390786). The cleavage rate decreases in an order of SAP2 &gt; SAP9 &gt; SAP3 &gt; SAP7 &gt; SAP4 &gt; SAP1 &gt; SAP8 (PubMed:27390786). The cleavage of Hst 5 by SAP7 results mainly in the appearance of the long DSHAKRHHGYKRKFHEKHHSH peptide which is then slowly proeeded to DSHAKRHHGYKR (PubMed:27390786).</text>
</comment>
<comment type="catalytic activity">
    <reaction evidence="10 11 12">
        <text>Preferential cleavage at the carboxyl of hydrophobic amino acids, but fails to cleave 15-Leu-|-Tyr-16, 16-Tyr-|-Leu-17 and 24-Phe-|-Phe-25 of insulin B chain. Activates trypsinogen, and degrades keratin.</text>
        <dbReference type="EC" id="3.4.23.24"/>
    </reaction>
</comment>
<comment type="activity regulation">
    <text evidence="10 11">Contrary to other SAPs, SAP7 is insensitive to pepstatin A inhibition, which is due restriction of the accessibility of pepstatin A to the active site by Met-242 and Thr-467.</text>
</comment>
<comment type="biophysicochemical properties">
    <phDependence>
        <text evidence="10 12">Optimum pH is 6.0-7.0, the pH of the saliva, for cleavage of both casein-resorufin and Hst 5.</text>
    </phDependence>
</comment>
<comment type="subunit">
    <text evidence="1">Monomer.</text>
</comment>
<comment type="subcellular location">
    <subcellularLocation>
        <location evidence="2">Secreted</location>
    </subcellularLocation>
</comment>
<comment type="induction">
    <text evidence="8 9">Expression is regulated by SSN6 and induced during host infection.</text>
</comment>
<comment type="PTM">
    <text evidence="11">N-glycosylated.</text>
</comment>
<comment type="similarity">
    <text evidence="14">Belongs to the peptidase A1 family.</text>
</comment>
<organism>
    <name type="scientific">Candida albicans (strain SC5314 / ATCC MYA-2876)</name>
    <name type="common">Yeast</name>
    <dbReference type="NCBI Taxonomy" id="237561"/>
    <lineage>
        <taxon>Eukaryota</taxon>
        <taxon>Fungi</taxon>
        <taxon>Dikarya</taxon>
        <taxon>Ascomycota</taxon>
        <taxon>Saccharomycotina</taxon>
        <taxon>Pichiomycetes</taxon>
        <taxon>Debaryomycetaceae</taxon>
        <taxon>Candida/Lodderomyces clade</taxon>
        <taxon>Candida</taxon>
    </lineage>
</organism>
<protein>
    <recommendedName>
        <fullName evidence="13">Secreted aspartic protease 7</fullName>
        <shortName evidence="14">ACP 7</shortName>
        <shortName evidence="14">Aspartate protease 7</shortName>
        <ecNumber evidence="10 11 12">3.4.23.24</ecNumber>
    </recommendedName>
    <alternativeName>
        <fullName evidence="14">Candidapepsin-7</fullName>
    </alternativeName>
</protein>
<name>CARP7_CANAL</name>
<evidence type="ECO:0000250" key="1">
    <source>
        <dbReference type="UniProtKB" id="P0CS83"/>
    </source>
</evidence>
<evidence type="ECO:0000250" key="2">
    <source>
        <dbReference type="UniProtKB" id="P0CY27"/>
    </source>
</evidence>
<evidence type="ECO:0000250" key="3">
    <source>
        <dbReference type="UniProtKB" id="P0CY29"/>
    </source>
</evidence>
<evidence type="ECO:0000255" key="4"/>
<evidence type="ECO:0000255" key="5">
    <source>
        <dbReference type="PROSITE-ProRule" id="PRU01103"/>
    </source>
</evidence>
<evidence type="ECO:0000255" key="6">
    <source>
        <dbReference type="PROSITE-ProRule" id="PRU10094"/>
    </source>
</evidence>
<evidence type="ECO:0000256" key="7">
    <source>
        <dbReference type="SAM" id="MobiDB-lite"/>
    </source>
</evidence>
<evidence type="ECO:0000269" key="8">
    <source>
    </source>
</evidence>
<evidence type="ECO:0000269" key="9">
    <source>
    </source>
</evidence>
<evidence type="ECO:0000269" key="10">
    <source>
    </source>
</evidence>
<evidence type="ECO:0000269" key="11">
    <source>
    </source>
</evidence>
<evidence type="ECO:0000269" key="12">
    <source>
    </source>
</evidence>
<evidence type="ECO:0000303" key="13">
    <source>
    </source>
</evidence>
<evidence type="ECO:0000305" key="14"/>
<reference key="1">
    <citation type="journal article" date="2004" name="Proc. Natl. Acad. Sci. U.S.A.">
        <title>The diploid genome sequence of Candida albicans.</title>
        <authorList>
            <person name="Jones T."/>
            <person name="Federspiel N.A."/>
            <person name="Chibana H."/>
            <person name="Dungan J."/>
            <person name="Kalman S."/>
            <person name="Magee B.B."/>
            <person name="Newport G."/>
            <person name="Thorstenson Y.R."/>
            <person name="Agabian N."/>
            <person name="Magee P.T."/>
            <person name="Davis R.W."/>
            <person name="Scherer S."/>
        </authorList>
    </citation>
    <scope>NUCLEOTIDE SEQUENCE [LARGE SCALE GENOMIC DNA]</scope>
    <source>
        <strain>SC5314 / ATCC MYA-2876</strain>
    </source>
</reference>
<reference key="2">
    <citation type="journal article" date="2007" name="Genome Biol.">
        <title>Assembly of the Candida albicans genome into sixteen supercontigs aligned on the eight chromosomes.</title>
        <authorList>
            <person name="van het Hoog M."/>
            <person name="Rast T.J."/>
            <person name="Martchenko M."/>
            <person name="Grindle S."/>
            <person name="Dignard D."/>
            <person name="Hogues H."/>
            <person name="Cuomo C."/>
            <person name="Berriman M."/>
            <person name="Scherer S."/>
            <person name="Magee B.B."/>
            <person name="Whiteway M."/>
            <person name="Chibana H."/>
            <person name="Nantel A."/>
            <person name="Magee P.T."/>
        </authorList>
    </citation>
    <scope>GENOME REANNOTATION</scope>
    <source>
        <strain>SC5314 / ATCC MYA-2876</strain>
    </source>
</reference>
<reference key="3">
    <citation type="journal article" date="2013" name="Genome Biol.">
        <title>Assembly of a phased diploid Candida albicans genome facilitates allele-specific measurements and provides a simple model for repeat and indel structure.</title>
        <authorList>
            <person name="Muzzey D."/>
            <person name="Schwartz K."/>
            <person name="Weissman J.S."/>
            <person name="Sherlock G."/>
        </authorList>
    </citation>
    <scope>NUCLEOTIDE SEQUENCE [LARGE SCALE GENOMIC DNA]</scope>
    <scope>GENOME REANNOTATION</scope>
    <source>
        <strain>SC5314 / ATCC MYA-2876</strain>
    </source>
</reference>
<reference key="4">
    <citation type="journal article" date="1994" name="Mol. Microbiol.">
        <title>Multiplicity of genes encoding secreted aspartic proteinases in Candida species.</title>
        <authorList>
            <person name="Monod M."/>
            <person name="Togni G."/>
            <person name="Hube B."/>
            <person name="Sanglard D."/>
        </authorList>
    </citation>
    <scope>IDENTIFICATION</scope>
</reference>
<reference key="5">
    <citation type="journal article" date="2005" name="Infect. Immun.">
        <title>Induction of SAP7 correlates with virulence in an intravenous infection model of candidiasis but not in a vaginal infection model in mice.</title>
        <authorList>
            <person name="Taylor B.N."/>
            <person name="Hannemann H."/>
            <person name="Sehnal M."/>
            <person name="Biesemeier A."/>
            <person name="Schweizer A."/>
            <person name="Rollinghoff M."/>
            <person name="Schroppel K."/>
        </authorList>
    </citation>
    <scope>INDUCTION</scope>
</reference>
<reference key="6">
    <citation type="journal article" date="2005" name="Mol. Biol. Cell">
        <title>Global roles of Ssn6 in Tup1- and Nrg1-dependent gene regulation in the fungal pathogen, Candida albicans.</title>
        <authorList>
            <person name="Garcia-Sanchez S."/>
            <person name="Mavor A.L."/>
            <person name="Russell C.L."/>
            <person name="Argimon S."/>
            <person name="Dennison P."/>
            <person name="Enjalbert B."/>
            <person name="Brown A.J."/>
        </authorList>
    </citation>
    <scope>INDUCTION</scope>
</reference>
<reference key="7">
    <citation type="journal article" date="2011" name="J. Biochem.">
        <title>Comprehensive characterization of secreted aspartic proteases encoded by a virulence gene family in Candida albicans.</title>
        <authorList>
            <person name="Aoki W."/>
            <person name="Kitahara N."/>
            <person name="Miura N."/>
            <person name="Morisaka H."/>
            <person name="Yamamoto Y."/>
            <person name="Kuroda K."/>
            <person name="Ueda M."/>
        </authorList>
    </citation>
    <scope>CATALYTIC ACTIVITY</scope>
    <scope>BIOPHYSICOCHEMICAL PROPERTIES</scope>
    <scope>ACTIVITY REGULATION</scope>
</reference>
<reference key="8">
    <citation type="journal article" date="2012" name="PLoS ONE">
        <title>Candida albicans possesses Sap7 as a pepstatin A-insensitive secreted aspartic protease.</title>
        <authorList>
            <person name="Aoki W."/>
            <person name="Kitahara N."/>
            <person name="Miura N."/>
            <person name="Morisaka H."/>
            <person name="Yamamoto Y."/>
            <person name="Kuroda K."/>
            <person name="Ueda M."/>
        </authorList>
    </citation>
    <scope>GLYCOSYLATION</scope>
    <scope>CATALYTIC ACTIVITY</scope>
    <scope>ACTIVE SITE</scope>
    <scope>PROPEPTIDE</scope>
    <scope>MUTAGENESIS OF MET-242; ASP-244; ASP-464 AND THR-467</scope>
    <scope>ACTIVITY REGULATION</scope>
</reference>
<reference key="9">
    <citation type="journal article" date="2016" name="Acta Biochim. Pol.">
        <title>The action of ten secreted aspartic proteases of pathogenic yeast Candida albicans on major human salivary antimicrobial peptide, histatin 5.</title>
        <authorList>
            <person name="Bochenska O."/>
            <person name="Rapala-Kozik M."/>
            <person name="Wolak N."/>
            <person name="Aoki W."/>
            <person name="Ueda M."/>
            <person name="Kozik A."/>
        </authorList>
    </citation>
    <scope>FUNCTION</scope>
    <scope>CATALYTIC ACTIVITY</scope>
    <scope>BIOPHYSICOCHEMICAL PROPERTIES</scope>
</reference>
<sequence length="588" mass="62526">MQRVLELLLLSSTALAVIGDGFIALPVHKLQAGEGSAHFPNRLPIFDVVNGVAKSVEDDVNQIIQPIFGNGIFSGGSIQGTHSGNGHSVKYEVSLPSSSSQKGSNGPSSTDNKDTDPSKTGFSLDDLMNSIPTDFWNLIGLNKAPTSSDNGSKDADFTPSAVSQVEQPTSKSVESTAPGPASSASSSSSSEAASSSQPSEDSQPSSSANKKTGAFFLSLDNTQTLYTATLKVGSPAQEVQVMIDTGSSDLWFISSGNSQCKVNGGSIDCDKYGVFDKSKSSTWHDNKTDYSISYYDGDKASGTMGQDNITFADGFSIENANFAVIDNTTSSIGVFGVGYPELEAVKSKYTNLPFAMKEQNLIAKVAYSLYLDSRDAVQGYILFGGIDHAKYTGDLKAFDIVQSNDKYVYSQIPLTSVASSLNNYTNAYGLPAGSNHPKVGAVIYNGTDSFNGGVDLKDTPTLLDTGTTYSYLSKDQVESIVGLYGNVTYNDAGKAYEVPCWVGNPGNYLEFNFKNEQYIKVPTSEFVISVGTYASGAELCVFGILPGTHSILGDNFMRSVYAVFDLEDHVISIAQAAYNDNHAVVPIE</sequence>
<accession>Q59VH7</accession>
<accession>A0A1D8PDF9</accession>